<proteinExistence type="inferred from homology"/>
<reference key="1">
    <citation type="journal article" date="1999" name="Nat. Genet.">
        <title>Comparative genomes of Chlamydia pneumoniae and C. trachomatis.</title>
        <authorList>
            <person name="Kalman S."/>
            <person name="Mitchell W.P."/>
            <person name="Marathe R."/>
            <person name="Lammel C.J."/>
            <person name="Fan J."/>
            <person name="Hyman R.W."/>
            <person name="Olinger L."/>
            <person name="Grimwood J."/>
            <person name="Davis R.W."/>
            <person name="Stephens R.S."/>
        </authorList>
    </citation>
    <scope>NUCLEOTIDE SEQUENCE [LARGE SCALE GENOMIC DNA]</scope>
    <source>
        <strain>CWL029</strain>
    </source>
</reference>
<reference key="2">
    <citation type="journal article" date="2000" name="Nucleic Acids Res.">
        <title>Genome sequences of Chlamydia trachomatis MoPn and Chlamydia pneumoniae AR39.</title>
        <authorList>
            <person name="Read T.D."/>
            <person name="Brunham R.C."/>
            <person name="Shen C."/>
            <person name="Gill S.R."/>
            <person name="Heidelberg J.F."/>
            <person name="White O."/>
            <person name="Hickey E.K."/>
            <person name="Peterson J.D."/>
            <person name="Utterback T.R."/>
            <person name="Berry K.J."/>
            <person name="Bass S."/>
            <person name="Linher K.D."/>
            <person name="Weidman J.F."/>
            <person name="Khouri H.M."/>
            <person name="Craven B."/>
            <person name="Bowman C."/>
            <person name="Dodson R.J."/>
            <person name="Gwinn M.L."/>
            <person name="Nelson W.C."/>
            <person name="DeBoy R.T."/>
            <person name="Kolonay J.F."/>
            <person name="McClarty G."/>
            <person name="Salzberg S.L."/>
            <person name="Eisen J.A."/>
            <person name="Fraser C.M."/>
        </authorList>
    </citation>
    <scope>NUCLEOTIDE SEQUENCE [LARGE SCALE GENOMIC DNA]</scope>
    <source>
        <strain>AR39</strain>
    </source>
</reference>
<reference key="3">
    <citation type="journal article" date="2000" name="Nucleic Acids Res.">
        <title>Comparison of whole genome sequences of Chlamydia pneumoniae J138 from Japan and CWL029 from USA.</title>
        <authorList>
            <person name="Shirai M."/>
            <person name="Hirakawa H."/>
            <person name="Kimoto M."/>
            <person name="Tabuchi M."/>
            <person name="Kishi F."/>
            <person name="Ouchi K."/>
            <person name="Shiba T."/>
            <person name="Ishii K."/>
            <person name="Hattori M."/>
            <person name="Kuhara S."/>
            <person name="Nakazawa T."/>
        </authorList>
    </citation>
    <scope>NUCLEOTIDE SEQUENCE [LARGE SCALE GENOMIC DNA]</scope>
    <source>
        <strain>J138</strain>
    </source>
</reference>
<reference key="4">
    <citation type="submission" date="2002-05" db="EMBL/GenBank/DDBJ databases">
        <title>The genome sequence of Chlamydia pneumoniae TW183 and comparison with other Chlamydia strains based on whole genome sequence analysis.</title>
        <authorList>
            <person name="Geng M.M."/>
            <person name="Schuhmacher A."/>
            <person name="Muehldorfer I."/>
            <person name="Bensch K.W."/>
            <person name="Schaefer K.P."/>
            <person name="Schneider S."/>
            <person name="Pohl T."/>
            <person name="Essig A."/>
            <person name="Marre R."/>
            <person name="Melchers K."/>
        </authorList>
    </citation>
    <scope>NUCLEOTIDE SEQUENCE [LARGE SCALE GENOMIC DNA]</scope>
    <source>
        <strain>TW-183</strain>
    </source>
</reference>
<sequence>MLSRIVTCFLFLLSSLPLFAEEEAAQSKNTFVQPAVMLAIAILFFYFILWRPEQKRRKAMEKRKNDLAKGDKVTAMGIIGTVDDIREHTVILNIASGKVEVLKGAISEILKPNDNKS</sequence>
<evidence type="ECO:0000250" key="1">
    <source>
        <dbReference type="UniProtKB" id="P0ADZ7"/>
    </source>
</evidence>
<evidence type="ECO:0000255" key="2"/>
<evidence type="ECO:0000305" key="3"/>
<protein>
    <recommendedName>
        <fullName>Sec translocon accessory complex subunit YajC</fullName>
    </recommendedName>
</protein>
<name>YAJC_CHLPN</name>
<dbReference type="EMBL" id="AE001363">
    <property type="protein sequence ID" value="AAD19022.1"/>
    <property type="molecule type" value="Genomic_DNA"/>
</dbReference>
<dbReference type="EMBL" id="AE002161">
    <property type="protein sequence ID" value="AAF38761.1"/>
    <property type="molecule type" value="Genomic_DNA"/>
</dbReference>
<dbReference type="EMBL" id="BA000008">
    <property type="protein sequence ID" value="BAA99092.1"/>
    <property type="molecule type" value="Genomic_DNA"/>
</dbReference>
<dbReference type="EMBL" id="AE009440">
    <property type="protein sequence ID" value="AAP98842.1"/>
    <property type="molecule type" value="Genomic_DNA"/>
</dbReference>
<dbReference type="PIR" id="B86601">
    <property type="entry name" value="B86601"/>
</dbReference>
<dbReference type="PIR" id="H72022">
    <property type="entry name" value="H72022"/>
</dbReference>
<dbReference type="RefSeq" id="NP_225079.1">
    <property type="nucleotide sequence ID" value="NC_000922.1"/>
</dbReference>
<dbReference type="RefSeq" id="WP_010883519.1">
    <property type="nucleotide sequence ID" value="NZ_LN847257.1"/>
</dbReference>
<dbReference type="SMR" id="Q9Z722"/>
<dbReference type="STRING" id="406984.CPK_ORF00293"/>
<dbReference type="GeneID" id="45050939"/>
<dbReference type="KEGG" id="cpa:CP_0982"/>
<dbReference type="KEGG" id="cpj:CPj0884"/>
<dbReference type="KEGG" id="cpn:CPn_0884"/>
<dbReference type="KEGG" id="cpt:CpB0913"/>
<dbReference type="PATRIC" id="fig|115713.3.peg.965"/>
<dbReference type="eggNOG" id="COG1862">
    <property type="taxonomic scope" value="Bacteria"/>
</dbReference>
<dbReference type="HOGENOM" id="CLU_116157_2_2_0"/>
<dbReference type="OMA" id="RLFMCFL"/>
<dbReference type="OrthoDB" id="9800132at2"/>
<dbReference type="Proteomes" id="UP000000583">
    <property type="component" value="Chromosome"/>
</dbReference>
<dbReference type="Proteomes" id="UP000000801">
    <property type="component" value="Chromosome"/>
</dbReference>
<dbReference type="GO" id="GO:0005886">
    <property type="term" value="C:plasma membrane"/>
    <property type="evidence" value="ECO:0007669"/>
    <property type="project" value="UniProtKB-SubCell"/>
</dbReference>
<dbReference type="GO" id="GO:0015031">
    <property type="term" value="P:protein transport"/>
    <property type="evidence" value="ECO:0007669"/>
    <property type="project" value="UniProtKB-KW"/>
</dbReference>
<dbReference type="InterPro" id="IPR003849">
    <property type="entry name" value="Preprotein_translocase_YajC"/>
</dbReference>
<dbReference type="NCBIfam" id="TIGR00739">
    <property type="entry name" value="yajC"/>
    <property type="match status" value="1"/>
</dbReference>
<dbReference type="PANTHER" id="PTHR33909">
    <property type="entry name" value="SEC TRANSLOCON ACCESSORY COMPLEX SUBUNIT YAJC"/>
    <property type="match status" value="1"/>
</dbReference>
<dbReference type="PANTHER" id="PTHR33909:SF1">
    <property type="entry name" value="SEC TRANSLOCON ACCESSORY COMPLEX SUBUNIT YAJC"/>
    <property type="match status" value="1"/>
</dbReference>
<dbReference type="Pfam" id="PF02699">
    <property type="entry name" value="YajC"/>
    <property type="match status" value="1"/>
</dbReference>
<dbReference type="PRINTS" id="PR01853">
    <property type="entry name" value="YAJCTRNLCASE"/>
</dbReference>
<dbReference type="SMART" id="SM01323">
    <property type="entry name" value="YajC"/>
    <property type="match status" value="1"/>
</dbReference>
<gene>
    <name type="primary">yajC</name>
    <name type="ordered locus">CPn_0884</name>
    <name type="ordered locus">CP_0982</name>
    <name type="ordered locus">CPj0884</name>
    <name type="ordered locus">CpB0913</name>
</gene>
<accession>Q9Z722</accession>
<accession>Q9JQ92</accession>
<feature type="chain" id="PRO_0000097030" description="Sec translocon accessory complex subunit YajC">
    <location>
        <begin position="1"/>
        <end position="117"/>
    </location>
</feature>
<feature type="transmembrane region" description="Helical" evidence="2">
    <location>
        <begin position="30"/>
        <end position="50"/>
    </location>
</feature>
<organism>
    <name type="scientific">Chlamydia pneumoniae</name>
    <name type="common">Chlamydophila pneumoniae</name>
    <dbReference type="NCBI Taxonomy" id="83558"/>
    <lineage>
        <taxon>Bacteria</taxon>
        <taxon>Pseudomonadati</taxon>
        <taxon>Chlamydiota</taxon>
        <taxon>Chlamydiia</taxon>
        <taxon>Chlamydiales</taxon>
        <taxon>Chlamydiaceae</taxon>
        <taxon>Chlamydia/Chlamydophila group</taxon>
        <taxon>Chlamydia</taxon>
    </lineage>
</organism>
<comment type="function">
    <text evidence="1">The SecYEG-SecDF-YajC-YidC holo-translocon (HTL) protein secretase/insertase is a supercomplex required for protein secretion, insertion of proteins into membranes, and assembly of membrane protein complexes. While the SecYEG complex is essential for assembly of a number of proteins and complexes, the SecDF-YajC-YidC subcomplex facilitates these functions.</text>
</comment>
<comment type="subunit">
    <text evidence="1">Part of the SecDF-YidC-YajC translocase complex. The SecDF-YidC-YajC translocase forms a supercomplex with SecYEG, called the holo-translocon (HTL).</text>
</comment>
<comment type="subcellular location">
    <subcellularLocation>
        <location evidence="1">Cell inner membrane</location>
        <topology evidence="1">Single-pass membrane protein</topology>
    </subcellularLocation>
</comment>
<comment type="similarity">
    <text evidence="3">Belongs to the YajC family.</text>
</comment>
<keyword id="KW-0997">Cell inner membrane</keyword>
<keyword id="KW-1003">Cell membrane</keyword>
<keyword id="KW-0472">Membrane</keyword>
<keyword id="KW-0653">Protein transport</keyword>
<keyword id="KW-0811">Translocation</keyword>
<keyword id="KW-0812">Transmembrane</keyword>
<keyword id="KW-1133">Transmembrane helix</keyword>
<keyword id="KW-0813">Transport</keyword>